<dbReference type="EC" id="2.7.7.90" evidence="1"/>
<dbReference type="EMBL" id="CP000507">
    <property type="protein sequence ID" value="ABL99845.1"/>
    <property type="molecule type" value="Genomic_DNA"/>
</dbReference>
<dbReference type="RefSeq" id="WP_011759753.1">
    <property type="nucleotide sequence ID" value="NC_008700.1"/>
</dbReference>
<dbReference type="SMR" id="A1S639"/>
<dbReference type="STRING" id="326297.Sama_1639"/>
<dbReference type="KEGG" id="saz:Sama_1639"/>
<dbReference type="eggNOG" id="COG1212">
    <property type="taxonomic scope" value="Bacteria"/>
</dbReference>
<dbReference type="HOGENOM" id="CLU_065038_0_1_6"/>
<dbReference type="OrthoDB" id="9815559at2"/>
<dbReference type="UniPathway" id="UPA00030"/>
<dbReference type="Proteomes" id="UP000009175">
    <property type="component" value="Chromosome"/>
</dbReference>
<dbReference type="GO" id="GO:0005829">
    <property type="term" value="C:cytosol"/>
    <property type="evidence" value="ECO:0007669"/>
    <property type="project" value="TreeGrafter"/>
</dbReference>
<dbReference type="GO" id="GO:0008690">
    <property type="term" value="F:3-deoxy-manno-octulosonate cytidylyltransferase activity"/>
    <property type="evidence" value="ECO:0007669"/>
    <property type="project" value="InterPro"/>
</dbReference>
<dbReference type="GO" id="GO:0009103">
    <property type="term" value="P:lipopolysaccharide biosynthetic process"/>
    <property type="evidence" value="ECO:0007669"/>
    <property type="project" value="UniProtKB-UniRule"/>
</dbReference>
<dbReference type="CDD" id="cd02517">
    <property type="entry name" value="CMP-KDO-Synthetase"/>
    <property type="match status" value="1"/>
</dbReference>
<dbReference type="FunFam" id="3.90.550.10:FF:000011">
    <property type="entry name" value="3-deoxy-manno-octulosonate cytidylyltransferase"/>
    <property type="match status" value="1"/>
</dbReference>
<dbReference type="Gene3D" id="3.90.550.10">
    <property type="entry name" value="Spore Coat Polysaccharide Biosynthesis Protein SpsA, Chain A"/>
    <property type="match status" value="1"/>
</dbReference>
<dbReference type="HAMAP" id="MF_00057">
    <property type="entry name" value="KdsB"/>
    <property type="match status" value="1"/>
</dbReference>
<dbReference type="InterPro" id="IPR003329">
    <property type="entry name" value="Cytidylyl_trans"/>
</dbReference>
<dbReference type="InterPro" id="IPR004528">
    <property type="entry name" value="KdsB"/>
</dbReference>
<dbReference type="InterPro" id="IPR029044">
    <property type="entry name" value="Nucleotide-diphossugar_trans"/>
</dbReference>
<dbReference type="NCBIfam" id="TIGR00466">
    <property type="entry name" value="kdsB"/>
    <property type="match status" value="1"/>
</dbReference>
<dbReference type="NCBIfam" id="NF003950">
    <property type="entry name" value="PRK05450.1-3"/>
    <property type="match status" value="1"/>
</dbReference>
<dbReference type="NCBIfam" id="NF003952">
    <property type="entry name" value="PRK05450.1-5"/>
    <property type="match status" value="1"/>
</dbReference>
<dbReference type="NCBIfam" id="NF009905">
    <property type="entry name" value="PRK13368.1"/>
    <property type="match status" value="1"/>
</dbReference>
<dbReference type="PANTHER" id="PTHR42866">
    <property type="entry name" value="3-DEOXY-MANNO-OCTULOSONATE CYTIDYLYLTRANSFERASE"/>
    <property type="match status" value="1"/>
</dbReference>
<dbReference type="PANTHER" id="PTHR42866:SF2">
    <property type="entry name" value="3-DEOXY-MANNO-OCTULOSONATE CYTIDYLYLTRANSFERASE, MITOCHONDRIAL"/>
    <property type="match status" value="1"/>
</dbReference>
<dbReference type="Pfam" id="PF02348">
    <property type="entry name" value="CTP_transf_3"/>
    <property type="match status" value="1"/>
</dbReference>
<dbReference type="SUPFAM" id="SSF53448">
    <property type="entry name" value="Nucleotide-diphospho-sugar transferases"/>
    <property type="match status" value="1"/>
</dbReference>
<comment type="function">
    <text evidence="1">Activates KDO8N (a required 8-carbon sugar) for incorporation into bacterial lipopolysaccharide in the Shewanella genus.</text>
</comment>
<comment type="catalytic activity">
    <reaction evidence="1">
        <text>8-amino-3,8-dideoxy-alpha-D-manno-octulosonate + CTP = CMP-8-amino-3,8-dideoxy-alpha-D-manno-oct-2-ulosonate + diphosphate</text>
        <dbReference type="Rhea" id="RHEA:49284"/>
        <dbReference type="ChEBI" id="CHEBI:33019"/>
        <dbReference type="ChEBI" id="CHEBI:37563"/>
        <dbReference type="ChEBI" id="CHEBI:87091"/>
        <dbReference type="ChEBI" id="CHEBI:91089"/>
        <dbReference type="EC" id="2.7.7.90"/>
    </reaction>
</comment>
<comment type="pathway">
    <text evidence="1">Bacterial outer membrane biogenesis; lipopolysaccharide biosynthesis.</text>
</comment>
<comment type="subcellular location">
    <subcellularLocation>
        <location evidence="1">Cytoplasm</location>
    </subcellularLocation>
</comment>
<comment type="similarity">
    <text evidence="1">Belongs to the KdsB family.</text>
</comment>
<name>KDSB_SHEAM</name>
<organism>
    <name type="scientific">Shewanella amazonensis (strain ATCC BAA-1098 / SB2B)</name>
    <dbReference type="NCBI Taxonomy" id="326297"/>
    <lineage>
        <taxon>Bacteria</taxon>
        <taxon>Pseudomonadati</taxon>
        <taxon>Pseudomonadota</taxon>
        <taxon>Gammaproteobacteria</taxon>
        <taxon>Alteromonadales</taxon>
        <taxon>Shewanellaceae</taxon>
        <taxon>Shewanella</taxon>
    </lineage>
</organism>
<feature type="chain" id="PRO_0000370144" description="8-amino-3,8-dideoxy-manno-octulosonate cytidylyltransferase">
    <location>
        <begin position="1"/>
        <end position="245"/>
    </location>
</feature>
<proteinExistence type="inferred from homology"/>
<reference key="1">
    <citation type="submission" date="2006-12" db="EMBL/GenBank/DDBJ databases">
        <title>Complete sequence of Shewanella amazonensis SB2B.</title>
        <authorList>
            <consortium name="US DOE Joint Genome Institute"/>
            <person name="Copeland A."/>
            <person name="Lucas S."/>
            <person name="Lapidus A."/>
            <person name="Barry K."/>
            <person name="Detter J.C."/>
            <person name="Glavina del Rio T."/>
            <person name="Hammon N."/>
            <person name="Israni S."/>
            <person name="Dalin E."/>
            <person name="Tice H."/>
            <person name="Pitluck S."/>
            <person name="Munk A.C."/>
            <person name="Brettin T."/>
            <person name="Bruce D."/>
            <person name="Han C."/>
            <person name="Tapia R."/>
            <person name="Gilna P."/>
            <person name="Schmutz J."/>
            <person name="Larimer F."/>
            <person name="Land M."/>
            <person name="Hauser L."/>
            <person name="Kyrpides N."/>
            <person name="Mikhailova N."/>
            <person name="Fredrickson J."/>
            <person name="Richardson P."/>
        </authorList>
    </citation>
    <scope>NUCLEOTIDE SEQUENCE [LARGE SCALE GENOMIC DNA]</scope>
    <source>
        <strain>ATCC BAA-1098 / SB2B</strain>
    </source>
</reference>
<protein>
    <recommendedName>
        <fullName evidence="1">8-amino-3,8-dideoxy-manno-octulosonate cytidylyltransferase</fullName>
        <ecNumber evidence="1">2.7.7.90</ecNumber>
    </recommendedName>
    <alternativeName>
        <fullName evidence="1">CMP-8-amino-3,8-dideoxy-manno-octulosonate synthase</fullName>
    </alternativeName>
</protein>
<sequence>MNVTLLIPARYGSSRFPGKPLAPINGKPMIQHVYERAALAKGLNAIYVATDDERIKDAVESFGGKVVMTGADAASGTDRIEDAITQLGLADDDLVINLQGDQPLIDPISIEQIVELFRRHPGEFEMATLGYQISDKAELDDPKHVKMVFDNDMYALYFSRACIPFGRDVSEYPVYKHLGVYAYTRRFVHTFNSLPLGRLEDLEKLEQLRALEYGHRIKVAISAFDSPEVDTPEDIRRCENRLKVD</sequence>
<evidence type="ECO:0000255" key="1">
    <source>
        <dbReference type="HAMAP-Rule" id="MF_00057"/>
    </source>
</evidence>
<gene>
    <name evidence="1" type="primary">kdsB</name>
    <name type="ordered locus">Sama_1639</name>
</gene>
<keyword id="KW-0963">Cytoplasm</keyword>
<keyword id="KW-0448">Lipopolysaccharide biosynthesis</keyword>
<keyword id="KW-0548">Nucleotidyltransferase</keyword>
<keyword id="KW-1185">Reference proteome</keyword>
<keyword id="KW-0808">Transferase</keyword>
<accession>A1S639</accession>